<gene>
    <name type="ordered locus">MIMI_L78</name>
</gene>
<proteinExistence type="predicted"/>
<dbReference type="EMBL" id="AY653733">
    <property type="protein sequence ID" value="AAV50353.1"/>
    <property type="molecule type" value="Genomic_DNA"/>
</dbReference>
<dbReference type="KEGG" id="vg:9924674"/>
<dbReference type="Proteomes" id="UP000001134">
    <property type="component" value="Genome"/>
</dbReference>
<organism>
    <name type="scientific">Acanthamoeba polyphaga mimivirus</name>
    <name type="common">APMV</name>
    <dbReference type="NCBI Taxonomy" id="212035"/>
    <lineage>
        <taxon>Viruses</taxon>
        <taxon>Varidnaviria</taxon>
        <taxon>Bamfordvirae</taxon>
        <taxon>Nucleocytoviricota</taxon>
        <taxon>Megaviricetes</taxon>
        <taxon>Imitervirales</taxon>
        <taxon>Mimiviridae</taxon>
        <taxon>Megamimivirinae</taxon>
        <taxon>Mimivirus</taxon>
        <taxon>Mimivirus bradfordmassiliense</taxon>
    </lineage>
</organism>
<sequence length="103" mass="12391">MMTYEIKTKISNSYERKCEKYRISHHVFDYQPDIKYMDGIRKIDPYLFLSDDSKKTLGKYHKPLDIIDAVEDYFEVFYDELCDSLNNNDNSENENSDKKLKKN</sequence>
<accession>Q5UPF6</accession>
<organismHost>
    <name type="scientific">Acanthamoeba polyphaga</name>
    <name type="common">Amoeba</name>
    <dbReference type="NCBI Taxonomy" id="5757"/>
</organismHost>
<keyword id="KW-1185">Reference proteome</keyword>
<feature type="chain" id="PRO_0000244034" description="Uncharacterized protein L78">
    <location>
        <begin position="1"/>
        <end position="103"/>
    </location>
</feature>
<reference key="1">
    <citation type="journal article" date="2004" name="Science">
        <title>The 1.2-megabase genome sequence of Mimivirus.</title>
        <authorList>
            <person name="Raoult D."/>
            <person name="Audic S."/>
            <person name="Robert C."/>
            <person name="Abergel C."/>
            <person name="Renesto P."/>
            <person name="Ogata H."/>
            <person name="La Scola B."/>
            <person name="Susan M."/>
            <person name="Claverie J.-M."/>
        </authorList>
    </citation>
    <scope>NUCLEOTIDE SEQUENCE [LARGE SCALE GENOMIC DNA]</scope>
    <source>
        <strain>Rowbotham-Bradford</strain>
    </source>
</reference>
<name>YL078_MIMIV</name>
<protein>
    <recommendedName>
        <fullName>Uncharacterized protein L78</fullName>
    </recommendedName>
</protein>